<proteinExistence type="inferred from homology"/>
<gene>
    <name evidence="1" type="primary">gpsA</name>
    <name type="ordered locus">LVIS_0643</name>
</gene>
<sequence>MSEKIAVLGAGSWGSILASVLDENGHDVRLWSYNPKQVEELNTQHTNTHYIKDFTFSPSLVAYSDLASALTDVDAILFVVPTKAIRSVAGQVATILQDQHLQPQLIHASKGIEQQTYKRLSQVLEEEIPAENRQAVTVLSGPSHAEDVARKDITLVTAASASPEAAKYVQKLFMTSYFRVYTNPDIIGVEIGAALKNIIALGAGALHGLGYGDNAKAALMTRGLAEISRLGTSFGADPMTFIGLSGVGDIIVTATSSNSRNWRAGDELGRGEALDDVINHMGMVIEGLATTKAAYELSRERGVSMPITEAIYQVIYEGKDIRTAISDLMQREGRSEF</sequence>
<accession>Q03SN4</accession>
<reference key="1">
    <citation type="journal article" date="2006" name="Proc. Natl. Acad. Sci. U.S.A.">
        <title>Comparative genomics of the lactic acid bacteria.</title>
        <authorList>
            <person name="Makarova K.S."/>
            <person name="Slesarev A."/>
            <person name="Wolf Y.I."/>
            <person name="Sorokin A."/>
            <person name="Mirkin B."/>
            <person name="Koonin E.V."/>
            <person name="Pavlov A."/>
            <person name="Pavlova N."/>
            <person name="Karamychev V."/>
            <person name="Polouchine N."/>
            <person name="Shakhova V."/>
            <person name="Grigoriev I."/>
            <person name="Lou Y."/>
            <person name="Rohksar D."/>
            <person name="Lucas S."/>
            <person name="Huang K."/>
            <person name="Goodstein D.M."/>
            <person name="Hawkins T."/>
            <person name="Plengvidhya V."/>
            <person name="Welker D."/>
            <person name="Hughes J."/>
            <person name="Goh Y."/>
            <person name="Benson A."/>
            <person name="Baldwin K."/>
            <person name="Lee J.-H."/>
            <person name="Diaz-Muniz I."/>
            <person name="Dosti B."/>
            <person name="Smeianov V."/>
            <person name="Wechter W."/>
            <person name="Barabote R."/>
            <person name="Lorca G."/>
            <person name="Altermann E."/>
            <person name="Barrangou R."/>
            <person name="Ganesan B."/>
            <person name="Xie Y."/>
            <person name="Rawsthorne H."/>
            <person name="Tamir D."/>
            <person name="Parker C."/>
            <person name="Breidt F."/>
            <person name="Broadbent J.R."/>
            <person name="Hutkins R."/>
            <person name="O'Sullivan D."/>
            <person name="Steele J."/>
            <person name="Unlu G."/>
            <person name="Saier M.H. Jr."/>
            <person name="Klaenhammer T."/>
            <person name="Richardson P."/>
            <person name="Kozyavkin S."/>
            <person name="Weimer B.C."/>
            <person name="Mills D.A."/>
        </authorList>
    </citation>
    <scope>NUCLEOTIDE SEQUENCE [LARGE SCALE GENOMIC DNA]</scope>
    <source>
        <strain>ATCC 367 / BCRC 12310 / CIP 105137 / JCM 1170 / LMG 11437 / NCIMB 947 / NCTC 947</strain>
    </source>
</reference>
<keyword id="KW-0963">Cytoplasm</keyword>
<keyword id="KW-0444">Lipid biosynthesis</keyword>
<keyword id="KW-0443">Lipid metabolism</keyword>
<keyword id="KW-0520">NAD</keyword>
<keyword id="KW-0521">NADP</keyword>
<keyword id="KW-0547">Nucleotide-binding</keyword>
<keyword id="KW-0560">Oxidoreductase</keyword>
<keyword id="KW-0594">Phospholipid biosynthesis</keyword>
<keyword id="KW-1208">Phospholipid metabolism</keyword>
<keyword id="KW-1185">Reference proteome</keyword>
<name>GPDA_LEVBA</name>
<evidence type="ECO:0000255" key="1">
    <source>
        <dbReference type="HAMAP-Rule" id="MF_00394"/>
    </source>
</evidence>
<feature type="chain" id="PRO_1000049516" description="Glycerol-3-phosphate dehydrogenase [NAD(P)+]">
    <location>
        <begin position="1"/>
        <end position="337"/>
    </location>
</feature>
<feature type="active site" description="Proton acceptor" evidence="1">
    <location>
        <position position="196"/>
    </location>
</feature>
<feature type="binding site" evidence="1">
    <location>
        <position position="12"/>
    </location>
    <ligand>
        <name>NADPH</name>
        <dbReference type="ChEBI" id="CHEBI:57783"/>
    </ligand>
</feature>
<feature type="binding site" evidence="1">
    <location>
        <position position="13"/>
    </location>
    <ligand>
        <name>NADPH</name>
        <dbReference type="ChEBI" id="CHEBI:57783"/>
    </ligand>
</feature>
<feature type="binding site" evidence="1">
    <location>
        <position position="110"/>
    </location>
    <ligand>
        <name>NADPH</name>
        <dbReference type="ChEBI" id="CHEBI:57783"/>
    </ligand>
</feature>
<feature type="binding site" evidence="1">
    <location>
        <position position="110"/>
    </location>
    <ligand>
        <name>sn-glycerol 3-phosphate</name>
        <dbReference type="ChEBI" id="CHEBI:57597"/>
    </ligand>
</feature>
<feature type="binding site" evidence="1">
    <location>
        <position position="141"/>
    </location>
    <ligand>
        <name>sn-glycerol 3-phosphate</name>
        <dbReference type="ChEBI" id="CHEBI:57597"/>
    </ligand>
</feature>
<feature type="binding site" evidence="1">
    <location>
        <position position="143"/>
    </location>
    <ligand>
        <name>sn-glycerol 3-phosphate</name>
        <dbReference type="ChEBI" id="CHEBI:57597"/>
    </ligand>
</feature>
<feature type="binding site" evidence="1">
    <location>
        <position position="145"/>
    </location>
    <ligand>
        <name>NADPH</name>
        <dbReference type="ChEBI" id="CHEBI:57783"/>
    </ligand>
</feature>
<feature type="binding site" evidence="1">
    <location>
        <position position="196"/>
    </location>
    <ligand>
        <name>sn-glycerol 3-phosphate</name>
        <dbReference type="ChEBI" id="CHEBI:57597"/>
    </ligand>
</feature>
<feature type="binding site" evidence="1">
    <location>
        <position position="249"/>
    </location>
    <ligand>
        <name>sn-glycerol 3-phosphate</name>
        <dbReference type="ChEBI" id="CHEBI:57597"/>
    </ligand>
</feature>
<feature type="binding site" evidence="1">
    <location>
        <position position="259"/>
    </location>
    <ligand>
        <name>sn-glycerol 3-phosphate</name>
        <dbReference type="ChEBI" id="CHEBI:57597"/>
    </ligand>
</feature>
<feature type="binding site" evidence="1">
    <location>
        <position position="260"/>
    </location>
    <ligand>
        <name>NADPH</name>
        <dbReference type="ChEBI" id="CHEBI:57783"/>
    </ligand>
</feature>
<feature type="binding site" evidence="1">
    <location>
        <position position="260"/>
    </location>
    <ligand>
        <name>sn-glycerol 3-phosphate</name>
        <dbReference type="ChEBI" id="CHEBI:57597"/>
    </ligand>
</feature>
<feature type="binding site" evidence="1">
    <location>
        <position position="261"/>
    </location>
    <ligand>
        <name>sn-glycerol 3-phosphate</name>
        <dbReference type="ChEBI" id="CHEBI:57597"/>
    </ligand>
</feature>
<feature type="binding site" evidence="1">
    <location>
        <position position="284"/>
    </location>
    <ligand>
        <name>NADPH</name>
        <dbReference type="ChEBI" id="CHEBI:57783"/>
    </ligand>
</feature>
<feature type="binding site" evidence="1">
    <location>
        <position position="286"/>
    </location>
    <ligand>
        <name>NADPH</name>
        <dbReference type="ChEBI" id="CHEBI:57783"/>
    </ligand>
</feature>
<protein>
    <recommendedName>
        <fullName evidence="1">Glycerol-3-phosphate dehydrogenase [NAD(P)+]</fullName>
        <ecNumber evidence="1">1.1.1.94</ecNumber>
    </recommendedName>
    <alternativeName>
        <fullName evidence="1">NAD(P)(+)-dependent glycerol-3-phosphate dehydrogenase</fullName>
    </alternativeName>
    <alternativeName>
        <fullName evidence="1">NAD(P)H-dependent dihydroxyacetone-phosphate reductase</fullName>
    </alternativeName>
</protein>
<dbReference type="EC" id="1.1.1.94" evidence="1"/>
<dbReference type="EMBL" id="CP000416">
    <property type="protein sequence ID" value="ABJ63788.1"/>
    <property type="molecule type" value="Genomic_DNA"/>
</dbReference>
<dbReference type="RefSeq" id="WP_011667420.1">
    <property type="nucleotide sequence ID" value="NC_008497.1"/>
</dbReference>
<dbReference type="SMR" id="Q03SN4"/>
<dbReference type="STRING" id="387344.LVIS_0643"/>
<dbReference type="KEGG" id="lbr:LVIS_0643"/>
<dbReference type="eggNOG" id="COG0240">
    <property type="taxonomic scope" value="Bacteria"/>
</dbReference>
<dbReference type="HOGENOM" id="CLU_033449_0_2_9"/>
<dbReference type="UniPathway" id="UPA00940"/>
<dbReference type="Proteomes" id="UP000001652">
    <property type="component" value="Chromosome"/>
</dbReference>
<dbReference type="GO" id="GO:0005829">
    <property type="term" value="C:cytosol"/>
    <property type="evidence" value="ECO:0007669"/>
    <property type="project" value="TreeGrafter"/>
</dbReference>
<dbReference type="GO" id="GO:0047952">
    <property type="term" value="F:glycerol-3-phosphate dehydrogenase [NAD(P)+] activity"/>
    <property type="evidence" value="ECO:0007669"/>
    <property type="project" value="UniProtKB-UniRule"/>
</dbReference>
<dbReference type="GO" id="GO:0051287">
    <property type="term" value="F:NAD binding"/>
    <property type="evidence" value="ECO:0007669"/>
    <property type="project" value="InterPro"/>
</dbReference>
<dbReference type="GO" id="GO:0005975">
    <property type="term" value="P:carbohydrate metabolic process"/>
    <property type="evidence" value="ECO:0007669"/>
    <property type="project" value="InterPro"/>
</dbReference>
<dbReference type="GO" id="GO:0046167">
    <property type="term" value="P:glycerol-3-phosphate biosynthetic process"/>
    <property type="evidence" value="ECO:0007669"/>
    <property type="project" value="UniProtKB-UniRule"/>
</dbReference>
<dbReference type="GO" id="GO:0046168">
    <property type="term" value="P:glycerol-3-phosphate catabolic process"/>
    <property type="evidence" value="ECO:0007669"/>
    <property type="project" value="InterPro"/>
</dbReference>
<dbReference type="GO" id="GO:0006650">
    <property type="term" value="P:glycerophospholipid metabolic process"/>
    <property type="evidence" value="ECO:0007669"/>
    <property type="project" value="UniProtKB-UniRule"/>
</dbReference>
<dbReference type="GO" id="GO:0008654">
    <property type="term" value="P:phospholipid biosynthetic process"/>
    <property type="evidence" value="ECO:0007669"/>
    <property type="project" value="UniProtKB-KW"/>
</dbReference>
<dbReference type="FunFam" id="1.10.1040.10:FF:000001">
    <property type="entry name" value="Glycerol-3-phosphate dehydrogenase [NAD(P)+]"/>
    <property type="match status" value="1"/>
</dbReference>
<dbReference type="FunFam" id="3.40.50.720:FF:000019">
    <property type="entry name" value="Glycerol-3-phosphate dehydrogenase [NAD(P)+]"/>
    <property type="match status" value="1"/>
</dbReference>
<dbReference type="Gene3D" id="1.10.1040.10">
    <property type="entry name" value="N-(1-d-carboxylethyl)-l-norvaline Dehydrogenase, domain 2"/>
    <property type="match status" value="1"/>
</dbReference>
<dbReference type="Gene3D" id="3.40.50.720">
    <property type="entry name" value="NAD(P)-binding Rossmann-like Domain"/>
    <property type="match status" value="1"/>
</dbReference>
<dbReference type="HAMAP" id="MF_00394">
    <property type="entry name" value="NAD_Glyc3P_dehydrog"/>
    <property type="match status" value="1"/>
</dbReference>
<dbReference type="InterPro" id="IPR008927">
    <property type="entry name" value="6-PGluconate_DH-like_C_sf"/>
</dbReference>
<dbReference type="InterPro" id="IPR013328">
    <property type="entry name" value="6PGD_dom2"/>
</dbReference>
<dbReference type="InterPro" id="IPR006168">
    <property type="entry name" value="G3P_DH_NAD-dep"/>
</dbReference>
<dbReference type="InterPro" id="IPR006109">
    <property type="entry name" value="G3P_DH_NAD-dep_C"/>
</dbReference>
<dbReference type="InterPro" id="IPR011128">
    <property type="entry name" value="G3P_DH_NAD-dep_N"/>
</dbReference>
<dbReference type="InterPro" id="IPR036291">
    <property type="entry name" value="NAD(P)-bd_dom_sf"/>
</dbReference>
<dbReference type="NCBIfam" id="NF000940">
    <property type="entry name" value="PRK00094.1-2"/>
    <property type="match status" value="1"/>
</dbReference>
<dbReference type="NCBIfam" id="NF000941">
    <property type="entry name" value="PRK00094.1-3"/>
    <property type="match status" value="1"/>
</dbReference>
<dbReference type="NCBIfam" id="NF000942">
    <property type="entry name" value="PRK00094.1-4"/>
    <property type="match status" value="1"/>
</dbReference>
<dbReference type="PANTHER" id="PTHR11728">
    <property type="entry name" value="GLYCEROL-3-PHOSPHATE DEHYDROGENASE"/>
    <property type="match status" value="1"/>
</dbReference>
<dbReference type="PANTHER" id="PTHR11728:SF1">
    <property type="entry name" value="GLYCEROL-3-PHOSPHATE DEHYDROGENASE [NAD(+)] 2, CHLOROPLASTIC"/>
    <property type="match status" value="1"/>
</dbReference>
<dbReference type="Pfam" id="PF07479">
    <property type="entry name" value="NAD_Gly3P_dh_C"/>
    <property type="match status" value="1"/>
</dbReference>
<dbReference type="Pfam" id="PF01210">
    <property type="entry name" value="NAD_Gly3P_dh_N"/>
    <property type="match status" value="1"/>
</dbReference>
<dbReference type="PIRSF" id="PIRSF000114">
    <property type="entry name" value="Glycerol-3-P_dh"/>
    <property type="match status" value="1"/>
</dbReference>
<dbReference type="PRINTS" id="PR00077">
    <property type="entry name" value="GPDHDRGNASE"/>
</dbReference>
<dbReference type="SUPFAM" id="SSF48179">
    <property type="entry name" value="6-phosphogluconate dehydrogenase C-terminal domain-like"/>
    <property type="match status" value="1"/>
</dbReference>
<dbReference type="SUPFAM" id="SSF51735">
    <property type="entry name" value="NAD(P)-binding Rossmann-fold domains"/>
    <property type="match status" value="1"/>
</dbReference>
<dbReference type="PROSITE" id="PS00957">
    <property type="entry name" value="NAD_G3PDH"/>
    <property type="match status" value="1"/>
</dbReference>
<comment type="function">
    <text evidence="1">Catalyzes the reduction of the glycolytic intermediate dihydroxyacetone phosphate (DHAP) to sn-glycerol 3-phosphate (G3P), the key precursor for phospholipid synthesis.</text>
</comment>
<comment type="catalytic activity">
    <reaction evidence="1">
        <text>sn-glycerol 3-phosphate + NAD(+) = dihydroxyacetone phosphate + NADH + H(+)</text>
        <dbReference type="Rhea" id="RHEA:11092"/>
        <dbReference type="ChEBI" id="CHEBI:15378"/>
        <dbReference type="ChEBI" id="CHEBI:57540"/>
        <dbReference type="ChEBI" id="CHEBI:57597"/>
        <dbReference type="ChEBI" id="CHEBI:57642"/>
        <dbReference type="ChEBI" id="CHEBI:57945"/>
        <dbReference type="EC" id="1.1.1.94"/>
    </reaction>
    <physiologicalReaction direction="right-to-left" evidence="1">
        <dbReference type="Rhea" id="RHEA:11094"/>
    </physiologicalReaction>
</comment>
<comment type="catalytic activity">
    <reaction evidence="1">
        <text>sn-glycerol 3-phosphate + NADP(+) = dihydroxyacetone phosphate + NADPH + H(+)</text>
        <dbReference type="Rhea" id="RHEA:11096"/>
        <dbReference type="ChEBI" id="CHEBI:15378"/>
        <dbReference type="ChEBI" id="CHEBI:57597"/>
        <dbReference type="ChEBI" id="CHEBI:57642"/>
        <dbReference type="ChEBI" id="CHEBI:57783"/>
        <dbReference type="ChEBI" id="CHEBI:58349"/>
        <dbReference type="EC" id="1.1.1.94"/>
    </reaction>
    <physiologicalReaction direction="right-to-left" evidence="1">
        <dbReference type="Rhea" id="RHEA:11098"/>
    </physiologicalReaction>
</comment>
<comment type="pathway">
    <text evidence="1">Membrane lipid metabolism; glycerophospholipid metabolism.</text>
</comment>
<comment type="subcellular location">
    <subcellularLocation>
        <location evidence="1">Cytoplasm</location>
    </subcellularLocation>
</comment>
<comment type="similarity">
    <text evidence="1">Belongs to the NAD-dependent glycerol-3-phosphate dehydrogenase family.</text>
</comment>
<organism>
    <name type="scientific">Levilactobacillus brevis (strain ATCC 367 / BCRC 12310 / CIP 105137 / JCM 1170 / LMG 11437 / NCIMB 947 / NCTC 947)</name>
    <name type="common">Lactobacillus brevis</name>
    <dbReference type="NCBI Taxonomy" id="387344"/>
    <lineage>
        <taxon>Bacteria</taxon>
        <taxon>Bacillati</taxon>
        <taxon>Bacillota</taxon>
        <taxon>Bacilli</taxon>
        <taxon>Lactobacillales</taxon>
        <taxon>Lactobacillaceae</taxon>
        <taxon>Levilactobacillus</taxon>
    </lineage>
</organism>